<accession>Q6ZRQ5</accession>
<accession>D6R9Y8</accession>
<accession>D6RBQ4</accession>
<accession>E1P529</accession>
<accession>Q5THT2</accession>
<accession>Q68CQ6</accession>
<accession>Q68D32</accession>
<comment type="function">
    <text evidence="2 3 4 5 6 7 8 9">Component of the MMS22L-TONSL complex, a complex that promotes homologous recombination-mediated repair of double-strand breaks (DSBs) at stalled or collapsed replication forks (PubMed:21055983, PubMed:21055984, PubMed:21055985, PubMed:21113133, PubMed:26527279, PubMed:27338793, PubMed:29478807). The MMS22L-TONSL complex is required to maintain genome integrity during DNA replication (PubMed:21055983, PubMed:21055984, PubMed:21055985, PubMed:27797818). It mediates the assembly of RAD51 filaments on single-stranded DNA (ssDNA): the MMS22L-TONSL complex is recruited to DSBs following histone replacement by histone chaperones and eviction of the replication protein A complex (RPA/RP-A) from DSBs (PubMed:21055983, PubMed:21055984, PubMed:21055985, PubMed:29478807). Following recruitment to DSBs, the TONSL-MMS22L complex promotes recruitment of RAD51 filaments and subsequent homologous recombination (PubMed:27797818, PubMed:29478807). Within the complex, MMS22L acts by binding ssDNA (PubMed:27797818).</text>
</comment>
<comment type="subunit">
    <text evidence="2 3 4 5 8">Component of the MMS22L-TONSL complex, a complex at least composed of MMS22L and TONSL/NFKBIL2 (PubMed:21055983, PubMed:21055984, PubMed:21055985, PubMed:21113133, PubMed:27797818). Interacts with RAD51; interaction is direct (PubMed:27797818).</text>
</comment>
<comment type="interaction">
    <interactant intactId="EBI-718662">
        <id>Q6ZRQ5</id>
    </interactant>
    <interactant intactId="EBI-1052467">
        <id>Q96HA7</id>
        <label>TONSL</label>
    </interactant>
    <organismsDiffer>false</organismsDiffer>
    <experiments>5</experiments>
</comment>
<comment type="subcellular location">
    <subcellularLocation>
        <location evidence="2 3 5">Nucleus</location>
    </subcellularLocation>
    <subcellularLocation>
        <location evidence="2 3 5 7 8">Chromosome</location>
    </subcellularLocation>
    <text evidence="2 3 8">Localizes to DNA damage sites, accumulates at stressed replication forks (PubMed:21055983, PubMed:21055984, PubMed:27797818). Recruited to stalled or collapsed replication forks; directly binds replication protein A complex (RPA/RP-A)-coated single-stranded DNA (ssDNA) (PubMed:27797818).</text>
</comment>
<comment type="PTM">
    <text evidence="5">Degraded by the ubiquitin-proteasome system upon replication stress.</text>
</comment>
<comment type="similarity">
    <text evidence="12">Belongs to the MMS22 family. MMS22L subfamily.</text>
</comment>
<gene>
    <name evidence="10 11 13" type="primary">MMS22L</name>
    <name evidence="13" type="synonym">C6orf167</name>
</gene>
<protein>
    <recommendedName>
        <fullName evidence="12">Protein MMS22-like</fullName>
    </recommendedName>
    <alternativeName>
        <fullName evidence="10 11">Methyl methanesulfonate-sensitivity protein 22-like</fullName>
    </alternativeName>
</protein>
<organism>
    <name type="scientific">Homo sapiens</name>
    <name type="common">Human</name>
    <dbReference type="NCBI Taxonomy" id="9606"/>
    <lineage>
        <taxon>Eukaryota</taxon>
        <taxon>Metazoa</taxon>
        <taxon>Chordata</taxon>
        <taxon>Craniata</taxon>
        <taxon>Vertebrata</taxon>
        <taxon>Euteleostomi</taxon>
        <taxon>Mammalia</taxon>
        <taxon>Eutheria</taxon>
        <taxon>Euarchontoglires</taxon>
        <taxon>Primates</taxon>
        <taxon>Haplorrhini</taxon>
        <taxon>Catarrhini</taxon>
        <taxon>Hominidae</taxon>
        <taxon>Homo</taxon>
    </lineage>
</organism>
<feature type="chain" id="PRO_0000260216" description="Protein MMS22-like">
    <location>
        <begin position="1"/>
        <end position="1243"/>
    </location>
</feature>
<feature type="sequence variant" id="VAR_029013" description="In dbSNP:rs9374435.">
    <original>N</original>
    <variation>D</variation>
    <location>
        <position position="419"/>
    </location>
</feature>
<feature type="sequence variant" id="VAR_029014" description="In dbSNP:rs9481410." evidence="1">
    <original>T</original>
    <variation>M</variation>
    <location>
        <position position="564"/>
    </location>
</feature>
<feature type="sequence variant" id="VAR_029015" description="In dbSNP:rs1737145." evidence="1">
    <original>V</original>
    <variation>A</variation>
    <location>
        <position position="875"/>
    </location>
</feature>
<feature type="sequence variant" id="VAR_029016" description="In dbSNP:rs10484830.">
    <original>P</original>
    <variation>L</variation>
    <location>
        <position position="1015"/>
    </location>
</feature>
<feature type="mutagenesis site" description="Does not affect interaction with RAD51." evidence="8">
    <original>FSCA</original>
    <variation>ASCD</variation>
    <location>
        <begin position="29"/>
        <end position="32"/>
    </location>
</feature>
<feature type="mutagenesis site" description="Does not affect interaction with RAD51." evidence="8">
    <original>FSCA</original>
    <variation>ASCD</variation>
    <location>
        <begin position="595"/>
        <end position="598"/>
    </location>
</feature>
<feature type="mutagenesis site" description="Abolished interaction with RAD51." evidence="8">
    <original>FLPA</original>
    <variation>ALPD</variation>
    <location>
        <begin position="1034"/>
        <end position="1037"/>
    </location>
</feature>
<feature type="mutagenesis site" description="Abolished interaction with RAD51." evidence="8">
    <original>F</original>
    <variation>A</variation>
    <location>
        <position position="1034"/>
    </location>
</feature>
<feature type="sequence conflict" description="In Ref. 1; BAC87254." evidence="12" ref="1">
    <original>C</original>
    <variation>R</variation>
    <location>
        <position position="292"/>
    </location>
</feature>
<dbReference type="EMBL" id="AK128060">
    <property type="protein sequence ID" value="BAC87254.1"/>
    <property type="molecule type" value="mRNA"/>
</dbReference>
<dbReference type="EMBL" id="AL023656">
    <property type="status" value="NOT_ANNOTATED_CDS"/>
    <property type="molecule type" value="Genomic_DNA"/>
</dbReference>
<dbReference type="EMBL" id="AL353679">
    <property type="status" value="NOT_ANNOTATED_CDS"/>
    <property type="molecule type" value="Genomic_DNA"/>
</dbReference>
<dbReference type="EMBL" id="AL590484">
    <property type="status" value="NOT_ANNOTATED_CDS"/>
    <property type="molecule type" value="Genomic_DNA"/>
</dbReference>
<dbReference type="EMBL" id="CH471051">
    <property type="protein sequence ID" value="EAW48494.1"/>
    <property type="molecule type" value="Genomic_DNA"/>
</dbReference>
<dbReference type="EMBL" id="CH471051">
    <property type="protein sequence ID" value="EAW48496.1"/>
    <property type="molecule type" value="Genomic_DNA"/>
</dbReference>
<dbReference type="EMBL" id="CR749603">
    <property type="protein sequence ID" value="CAH18398.1"/>
    <property type="molecule type" value="mRNA"/>
</dbReference>
<dbReference type="EMBL" id="CR749822">
    <property type="protein sequence ID" value="CAH18682.1"/>
    <property type="molecule type" value="mRNA"/>
</dbReference>
<dbReference type="CCDS" id="CCDS5039.1"/>
<dbReference type="RefSeq" id="NP_001337528.1">
    <property type="nucleotide sequence ID" value="NM_001350599.2"/>
</dbReference>
<dbReference type="RefSeq" id="NP_940870.2">
    <property type="nucleotide sequence ID" value="NM_198468.4"/>
</dbReference>
<dbReference type="RefSeq" id="XP_006715493.1">
    <property type="nucleotide sequence ID" value="XM_006715430.1"/>
</dbReference>
<dbReference type="RefSeq" id="XP_047274530.1">
    <property type="nucleotide sequence ID" value="XM_047418574.1"/>
</dbReference>
<dbReference type="RefSeq" id="XP_047274531.1">
    <property type="nucleotide sequence ID" value="XM_047418575.1"/>
</dbReference>
<dbReference type="BioGRID" id="128982">
    <property type="interactions" value="72"/>
</dbReference>
<dbReference type="CORUM" id="Q6ZRQ5"/>
<dbReference type="FunCoup" id="Q6ZRQ5">
    <property type="interactions" value="3144"/>
</dbReference>
<dbReference type="IntAct" id="Q6ZRQ5">
    <property type="interactions" value="32"/>
</dbReference>
<dbReference type="MINT" id="Q6ZRQ5"/>
<dbReference type="STRING" id="9606.ENSP00000275053"/>
<dbReference type="iPTMnet" id="Q6ZRQ5"/>
<dbReference type="PhosphoSitePlus" id="Q6ZRQ5"/>
<dbReference type="SwissPalm" id="Q6ZRQ5"/>
<dbReference type="BioMuta" id="MMS22L"/>
<dbReference type="DMDM" id="281185507"/>
<dbReference type="jPOST" id="Q6ZRQ5"/>
<dbReference type="MassIVE" id="Q6ZRQ5"/>
<dbReference type="PaxDb" id="9606-ENSP00000275053"/>
<dbReference type="PeptideAtlas" id="Q6ZRQ5"/>
<dbReference type="ProteomicsDB" id="68153"/>
<dbReference type="Pumba" id="Q6ZRQ5"/>
<dbReference type="Antibodypedia" id="55212">
    <property type="antibodies" value="8 antibodies from 7 providers"/>
</dbReference>
<dbReference type="DNASU" id="253714"/>
<dbReference type="Ensembl" id="ENST00000275053.8">
    <property type="protein sequence ID" value="ENSP00000275053.4"/>
    <property type="gene ID" value="ENSG00000146263.12"/>
</dbReference>
<dbReference type="Ensembl" id="ENST00000683635.1">
    <property type="protein sequence ID" value="ENSP00000508046.1"/>
    <property type="gene ID" value="ENSG00000146263.12"/>
</dbReference>
<dbReference type="GeneID" id="253714"/>
<dbReference type="KEGG" id="hsa:253714"/>
<dbReference type="MANE-Select" id="ENST00000683635.1">
    <property type="protein sequence ID" value="ENSP00000508046.1"/>
    <property type="RefSeq nucleotide sequence ID" value="NM_001350599.2"/>
    <property type="RefSeq protein sequence ID" value="NP_001337528.1"/>
</dbReference>
<dbReference type="UCSC" id="uc003ppb.3">
    <property type="organism name" value="human"/>
</dbReference>
<dbReference type="AGR" id="HGNC:21475"/>
<dbReference type="CTD" id="253714"/>
<dbReference type="DisGeNET" id="253714"/>
<dbReference type="GeneCards" id="MMS22L"/>
<dbReference type="HGNC" id="HGNC:21475">
    <property type="gene designation" value="MMS22L"/>
</dbReference>
<dbReference type="HPA" id="ENSG00000146263">
    <property type="expression patterns" value="Tissue enhanced (bone)"/>
</dbReference>
<dbReference type="MIM" id="615614">
    <property type="type" value="gene"/>
</dbReference>
<dbReference type="neXtProt" id="NX_Q6ZRQ5"/>
<dbReference type="OpenTargets" id="ENSG00000146263"/>
<dbReference type="PharmGKB" id="PA134878007"/>
<dbReference type="VEuPathDB" id="HostDB:ENSG00000146263"/>
<dbReference type="eggNOG" id="ENOG502QQCR">
    <property type="taxonomic scope" value="Eukaryota"/>
</dbReference>
<dbReference type="GeneTree" id="ENSGT00390000011769"/>
<dbReference type="HOGENOM" id="CLU_007143_0_0_1"/>
<dbReference type="InParanoid" id="Q6ZRQ5"/>
<dbReference type="OMA" id="RVYLCLL"/>
<dbReference type="OrthoDB" id="8193282at2759"/>
<dbReference type="PAN-GO" id="Q6ZRQ5">
    <property type="GO annotations" value="3 GO annotations based on evolutionary models"/>
</dbReference>
<dbReference type="PhylomeDB" id="Q6ZRQ5"/>
<dbReference type="TreeFam" id="TF353832"/>
<dbReference type="PathwayCommons" id="Q6ZRQ5"/>
<dbReference type="SignaLink" id="Q6ZRQ5"/>
<dbReference type="BioGRID-ORCS" id="253714">
    <property type="hits" value="761 hits in 1159 CRISPR screens"/>
</dbReference>
<dbReference type="ChiTaRS" id="MMS22L">
    <property type="organism name" value="human"/>
</dbReference>
<dbReference type="GeneWiki" id="MMS22L"/>
<dbReference type="GenomeRNAi" id="253714"/>
<dbReference type="Pharos" id="Q6ZRQ5">
    <property type="development level" value="Tbio"/>
</dbReference>
<dbReference type="PRO" id="PR:Q6ZRQ5"/>
<dbReference type="Proteomes" id="UP000005640">
    <property type="component" value="Chromosome 6"/>
</dbReference>
<dbReference type="RNAct" id="Q6ZRQ5">
    <property type="molecule type" value="protein"/>
</dbReference>
<dbReference type="Bgee" id="ENSG00000146263">
    <property type="expression patterns" value="Expressed in male germ line stem cell (sensu Vertebrata) in testis and 109 other cell types or tissues"/>
</dbReference>
<dbReference type="ExpressionAtlas" id="Q6ZRQ5">
    <property type="expression patterns" value="baseline and differential"/>
</dbReference>
<dbReference type="GO" id="GO:0005829">
    <property type="term" value="C:cytosol"/>
    <property type="evidence" value="ECO:0000314"/>
    <property type="project" value="HPA"/>
</dbReference>
<dbReference type="GO" id="GO:0043596">
    <property type="term" value="C:nuclear replication fork"/>
    <property type="evidence" value="ECO:0000314"/>
    <property type="project" value="UniProtKB"/>
</dbReference>
<dbReference type="GO" id="GO:0005654">
    <property type="term" value="C:nucleoplasm"/>
    <property type="evidence" value="ECO:0000314"/>
    <property type="project" value="HPA"/>
</dbReference>
<dbReference type="GO" id="GO:0005634">
    <property type="term" value="C:nucleus"/>
    <property type="evidence" value="ECO:0000314"/>
    <property type="project" value="UniProtKB"/>
</dbReference>
<dbReference type="GO" id="GO:0090734">
    <property type="term" value="C:site of DNA damage"/>
    <property type="evidence" value="ECO:0000314"/>
    <property type="project" value="UniProtKB"/>
</dbReference>
<dbReference type="GO" id="GO:0035861">
    <property type="term" value="C:site of double-strand break"/>
    <property type="evidence" value="ECO:0000314"/>
    <property type="project" value="UniProt"/>
</dbReference>
<dbReference type="GO" id="GO:0003697">
    <property type="term" value="F:single-stranded DNA binding"/>
    <property type="evidence" value="ECO:0000314"/>
    <property type="project" value="UniProtKB"/>
</dbReference>
<dbReference type="GO" id="GO:0006325">
    <property type="term" value="P:chromatin organization"/>
    <property type="evidence" value="ECO:0007669"/>
    <property type="project" value="UniProtKB-KW"/>
</dbReference>
<dbReference type="GO" id="GO:0000724">
    <property type="term" value="P:double-strand break repair via homologous recombination"/>
    <property type="evidence" value="ECO:0000314"/>
    <property type="project" value="UniProtKB"/>
</dbReference>
<dbReference type="GO" id="GO:0071168">
    <property type="term" value="P:protein localization to chromatin"/>
    <property type="evidence" value="ECO:0000314"/>
    <property type="project" value="UniProt"/>
</dbReference>
<dbReference type="GO" id="GO:0031297">
    <property type="term" value="P:replication fork processing"/>
    <property type="evidence" value="ECO:0000314"/>
    <property type="project" value="UniProtKB"/>
</dbReference>
<dbReference type="InterPro" id="IPR042320">
    <property type="entry name" value="MMS22-like"/>
</dbReference>
<dbReference type="InterPro" id="IPR029424">
    <property type="entry name" value="MMS22L_C"/>
</dbReference>
<dbReference type="InterPro" id="IPR029425">
    <property type="entry name" value="MMS22L_N"/>
</dbReference>
<dbReference type="PANTHER" id="PTHR28547">
    <property type="entry name" value="PROTEIN MMS22-LIKE"/>
    <property type="match status" value="1"/>
</dbReference>
<dbReference type="PANTHER" id="PTHR28547:SF1">
    <property type="entry name" value="PROTEIN MMS22-LIKE"/>
    <property type="match status" value="1"/>
</dbReference>
<dbReference type="Pfam" id="PF14911">
    <property type="entry name" value="MMS22L_C"/>
    <property type="match status" value="1"/>
</dbReference>
<dbReference type="Pfam" id="PF14910">
    <property type="entry name" value="MMS22L_N"/>
    <property type="match status" value="1"/>
</dbReference>
<name>MMS22_HUMAN</name>
<reference key="1">
    <citation type="journal article" date="2004" name="Nat. Genet.">
        <title>Complete sequencing and characterization of 21,243 full-length human cDNAs.</title>
        <authorList>
            <person name="Ota T."/>
            <person name="Suzuki Y."/>
            <person name="Nishikawa T."/>
            <person name="Otsuki T."/>
            <person name="Sugiyama T."/>
            <person name="Irie R."/>
            <person name="Wakamatsu A."/>
            <person name="Hayashi K."/>
            <person name="Sato H."/>
            <person name="Nagai K."/>
            <person name="Kimura K."/>
            <person name="Makita H."/>
            <person name="Sekine M."/>
            <person name="Obayashi M."/>
            <person name="Nishi T."/>
            <person name="Shibahara T."/>
            <person name="Tanaka T."/>
            <person name="Ishii S."/>
            <person name="Yamamoto J."/>
            <person name="Saito K."/>
            <person name="Kawai Y."/>
            <person name="Isono Y."/>
            <person name="Nakamura Y."/>
            <person name="Nagahari K."/>
            <person name="Murakami K."/>
            <person name="Yasuda T."/>
            <person name="Iwayanagi T."/>
            <person name="Wagatsuma M."/>
            <person name="Shiratori A."/>
            <person name="Sudo H."/>
            <person name="Hosoiri T."/>
            <person name="Kaku Y."/>
            <person name="Kodaira H."/>
            <person name="Kondo H."/>
            <person name="Sugawara M."/>
            <person name="Takahashi M."/>
            <person name="Kanda K."/>
            <person name="Yokoi T."/>
            <person name="Furuya T."/>
            <person name="Kikkawa E."/>
            <person name="Omura Y."/>
            <person name="Abe K."/>
            <person name="Kamihara K."/>
            <person name="Katsuta N."/>
            <person name="Sato K."/>
            <person name="Tanikawa M."/>
            <person name="Yamazaki M."/>
            <person name="Ninomiya K."/>
            <person name="Ishibashi T."/>
            <person name="Yamashita H."/>
            <person name="Murakawa K."/>
            <person name="Fujimori K."/>
            <person name="Tanai H."/>
            <person name="Kimata M."/>
            <person name="Watanabe M."/>
            <person name="Hiraoka S."/>
            <person name="Chiba Y."/>
            <person name="Ishida S."/>
            <person name="Ono Y."/>
            <person name="Takiguchi S."/>
            <person name="Watanabe S."/>
            <person name="Yosida M."/>
            <person name="Hotuta T."/>
            <person name="Kusano J."/>
            <person name="Kanehori K."/>
            <person name="Takahashi-Fujii A."/>
            <person name="Hara H."/>
            <person name="Tanase T.-O."/>
            <person name="Nomura Y."/>
            <person name="Togiya S."/>
            <person name="Komai F."/>
            <person name="Hara R."/>
            <person name="Takeuchi K."/>
            <person name="Arita M."/>
            <person name="Imose N."/>
            <person name="Musashino K."/>
            <person name="Yuuki H."/>
            <person name="Oshima A."/>
            <person name="Sasaki N."/>
            <person name="Aotsuka S."/>
            <person name="Yoshikawa Y."/>
            <person name="Matsunawa H."/>
            <person name="Ichihara T."/>
            <person name="Shiohata N."/>
            <person name="Sano S."/>
            <person name="Moriya S."/>
            <person name="Momiyama H."/>
            <person name="Satoh N."/>
            <person name="Takami S."/>
            <person name="Terashima Y."/>
            <person name="Suzuki O."/>
            <person name="Nakagawa S."/>
            <person name="Senoh A."/>
            <person name="Mizoguchi H."/>
            <person name="Goto Y."/>
            <person name="Shimizu F."/>
            <person name="Wakebe H."/>
            <person name="Hishigaki H."/>
            <person name="Watanabe T."/>
            <person name="Sugiyama A."/>
            <person name="Takemoto M."/>
            <person name="Kawakami B."/>
            <person name="Yamazaki M."/>
            <person name="Watanabe K."/>
            <person name="Kumagai A."/>
            <person name="Itakura S."/>
            <person name="Fukuzumi Y."/>
            <person name="Fujimori Y."/>
            <person name="Komiyama M."/>
            <person name="Tashiro H."/>
            <person name="Tanigami A."/>
            <person name="Fujiwara T."/>
            <person name="Ono T."/>
            <person name="Yamada K."/>
            <person name="Fujii Y."/>
            <person name="Ozaki K."/>
            <person name="Hirao M."/>
            <person name="Ohmori Y."/>
            <person name="Kawabata A."/>
            <person name="Hikiji T."/>
            <person name="Kobatake N."/>
            <person name="Inagaki H."/>
            <person name="Ikema Y."/>
            <person name="Okamoto S."/>
            <person name="Okitani R."/>
            <person name="Kawakami T."/>
            <person name="Noguchi S."/>
            <person name="Itoh T."/>
            <person name="Shigeta K."/>
            <person name="Senba T."/>
            <person name="Matsumura K."/>
            <person name="Nakajima Y."/>
            <person name="Mizuno T."/>
            <person name="Morinaga M."/>
            <person name="Sasaki M."/>
            <person name="Togashi T."/>
            <person name="Oyama M."/>
            <person name="Hata H."/>
            <person name="Watanabe M."/>
            <person name="Komatsu T."/>
            <person name="Mizushima-Sugano J."/>
            <person name="Satoh T."/>
            <person name="Shirai Y."/>
            <person name="Takahashi Y."/>
            <person name="Nakagawa K."/>
            <person name="Okumura K."/>
            <person name="Nagase T."/>
            <person name="Nomura N."/>
            <person name="Kikuchi H."/>
            <person name="Masuho Y."/>
            <person name="Yamashita R."/>
            <person name="Nakai K."/>
            <person name="Yada T."/>
            <person name="Nakamura Y."/>
            <person name="Ohara O."/>
            <person name="Isogai T."/>
            <person name="Sugano S."/>
        </authorList>
    </citation>
    <scope>NUCLEOTIDE SEQUENCE [LARGE SCALE MRNA]</scope>
    <scope>VARIANTS MET-564 AND ALA-875</scope>
    <source>
        <tissue>Testis</tissue>
    </source>
</reference>
<reference key="2">
    <citation type="journal article" date="2003" name="Nature">
        <title>The DNA sequence and analysis of human chromosome 6.</title>
        <authorList>
            <person name="Mungall A.J."/>
            <person name="Palmer S.A."/>
            <person name="Sims S.K."/>
            <person name="Edwards C.A."/>
            <person name="Ashurst J.L."/>
            <person name="Wilming L."/>
            <person name="Jones M.C."/>
            <person name="Horton R."/>
            <person name="Hunt S.E."/>
            <person name="Scott C.E."/>
            <person name="Gilbert J.G.R."/>
            <person name="Clamp M.E."/>
            <person name="Bethel G."/>
            <person name="Milne S."/>
            <person name="Ainscough R."/>
            <person name="Almeida J.P."/>
            <person name="Ambrose K.D."/>
            <person name="Andrews T.D."/>
            <person name="Ashwell R.I.S."/>
            <person name="Babbage A.K."/>
            <person name="Bagguley C.L."/>
            <person name="Bailey J."/>
            <person name="Banerjee R."/>
            <person name="Barker D.J."/>
            <person name="Barlow K.F."/>
            <person name="Bates K."/>
            <person name="Beare D.M."/>
            <person name="Beasley H."/>
            <person name="Beasley O."/>
            <person name="Bird C.P."/>
            <person name="Blakey S.E."/>
            <person name="Bray-Allen S."/>
            <person name="Brook J."/>
            <person name="Brown A.J."/>
            <person name="Brown J.Y."/>
            <person name="Burford D.C."/>
            <person name="Burrill W."/>
            <person name="Burton J."/>
            <person name="Carder C."/>
            <person name="Carter N.P."/>
            <person name="Chapman J.C."/>
            <person name="Clark S.Y."/>
            <person name="Clark G."/>
            <person name="Clee C.M."/>
            <person name="Clegg S."/>
            <person name="Cobley V."/>
            <person name="Collier R.E."/>
            <person name="Collins J.E."/>
            <person name="Colman L.K."/>
            <person name="Corby N.R."/>
            <person name="Coville G.J."/>
            <person name="Culley K.M."/>
            <person name="Dhami P."/>
            <person name="Davies J."/>
            <person name="Dunn M."/>
            <person name="Earthrowl M.E."/>
            <person name="Ellington A.E."/>
            <person name="Evans K.A."/>
            <person name="Faulkner L."/>
            <person name="Francis M.D."/>
            <person name="Frankish A."/>
            <person name="Frankland J."/>
            <person name="French L."/>
            <person name="Garner P."/>
            <person name="Garnett J."/>
            <person name="Ghori M.J."/>
            <person name="Gilby L.M."/>
            <person name="Gillson C.J."/>
            <person name="Glithero R.J."/>
            <person name="Grafham D.V."/>
            <person name="Grant M."/>
            <person name="Gribble S."/>
            <person name="Griffiths C."/>
            <person name="Griffiths M.N.D."/>
            <person name="Hall R."/>
            <person name="Halls K.S."/>
            <person name="Hammond S."/>
            <person name="Harley J.L."/>
            <person name="Hart E.A."/>
            <person name="Heath P.D."/>
            <person name="Heathcott R."/>
            <person name="Holmes S.J."/>
            <person name="Howden P.J."/>
            <person name="Howe K.L."/>
            <person name="Howell G.R."/>
            <person name="Huckle E."/>
            <person name="Humphray S.J."/>
            <person name="Humphries M.D."/>
            <person name="Hunt A.R."/>
            <person name="Johnson C.M."/>
            <person name="Joy A.A."/>
            <person name="Kay M."/>
            <person name="Keenan S.J."/>
            <person name="Kimberley A.M."/>
            <person name="King A."/>
            <person name="Laird G.K."/>
            <person name="Langford C."/>
            <person name="Lawlor S."/>
            <person name="Leongamornlert D.A."/>
            <person name="Leversha M."/>
            <person name="Lloyd C.R."/>
            <person name="Lloyd D.M."/>
            <person name="Loveland J.E."/>
            <person name="Lovell J."/>
            <person name="Martin S."/>
            <person name="Mashreghi-Mohammadi M."/>
            <person name="Maslen G.L."/>
            <person name="Matthews L."/>
            <person name="McCann O.T."/>
            <person name="McLaren S.J."/>
            <person name="McLay K."/>
            <person name="McMurray A."/>
            <person name="Moore M.J.F."/>
            <person name="Mullikin J.C."/>
            <person name="Niblett D."/>
            <person name="Nickerson T."/>
            <person name="Novik K.L."/>
            <person name="Oliver K."/>
            <person name="Overton-Larty E.K."/>
            <person name="Parker A."/>
            <person name="Patel R."/>
            <person name="Pearce A.V."/>
            <person name="Peck A.I."/>
            <person name="Phillimore B.J.C.T."/>
            <person name="Phillips S."/>
            <person name="Plumb R.W."/>
            <person name="Porter K.M."/>
            <person name="Ramsey Y."/>
            <person name="Ranby S.A."/>
            <person name="Rice C.M."/>
            <person name="Ross M.T."/>
            <person name="Searle S.M."/>
            <person name="Sehra H.K."/>
            <person name="Sheridan E."/>
            <person name="Skuce C.D."/>
            <person name="Smith S."/>
            <person name="Smith M."/>
            <person name="Spraggon L."/>
            <person name="Squares S.L."/>
            <person name="Steward C.A."/>
            <person name="Sycamore N."/>
            <person name="Tamlyn-Hall G."/>
            <person name="Tester J."/>
            <person name="Theaker A.J."/>
            <person name="Thomas D.W."/>
            <person name="Thorpe A."/>
            <person name="Tracey A."/>
            <person name="Tromans A."/>
            <person name="Tubby B."/>
            <person name="Wall M."/>
            <person name="Wallis J.M."/>
            <person name="West A.P."/>
            <person name="White S.S."/>
            <person name="Whitehead S.L."/>
            <person name="Whittaker H."/>
            <person name="Wild A."/>
            <person name="Willey D.J."/>
            <person name="Wilmer T.E."/>
            <person name="Wood J.M."/>
            <person name="Wray P.W."/>
            <person name="Wyatt J.C."/>
            <person name="Young L."/>
            <person name="Younger R.M."/>
            <person name="Bentley D.R."/>
            <person name="Coulson A."/>
            <person name="Durbin R.M."/>
            <person name="Hubbard T."/>
            <person name="Sulston J.E."/>
            <person name="Dunham I."/>
            <person name="Rogers J."/>
            <person name="Beck S."/>
        </authorList>
    </citation>
    <scope>NUCLEOTIDE SEQUENCE [LARGE SCALE GENOMIC DNA]</scope>
</reference>
<reference key="3">
    <citation type="submission" date="2005-09" db="EMBL/GenBank/DDBJ databases">
        <authorList>
            <person name="Mural R.J."/>
            <person name="Istrail S."/>
            <person name="Sutton G.G."/>
            <person name="Florea L."/>
            <person name="Halpern A.L."/>
            <person name="Mobarry C.M."/>
            <person name="Lippert R."/>
            <person name="Walenz B."/>
            <person name="Shatkay H."/>
            <person name="Dew I."/>
            <person name="Miller J.R."/>
            <person name="Flanigan M.J."/>
            <person name="Edwards N.J."/>
            <person name="Bolanos R."/>
            <person name="Fasulo D."/>
            <person name="Halldorsson B.V."/>
            <person name="Hannenhalli S."/>
            <person name="Turner R."/>
            <person name="Yooseph S."/>
            <person name="Lu F."/>
            <person name="Nusskern D.R."/>
            <person name="Shue B.C."/>
            <person name="Zheng X.H."/>
            <person name="Zhong F."/>
            <person name="Delcher A.L."/>
            <person name="Huson D.H."/>
            <person name="Kravitz S.A."/>
            <person name="Mouchard L."/>
            <person name="Reinert K."/>
            <person name="Remington K.A."/>
            <person name="Clark A.G."/>
            <person name="Waterman M.S."/>
            <person name="Eichler E.E."/>
            <person name="Adams M.D."/>
            <person name="Hunkapiller M.W."/>
            <person name="Myers E.W."/>
            <person name="Venter J.C."/>
        </authorList>
    </citation>
    <scope>NUCLEOTIDE SEQUENCE [LARGE SCALE GENOMIC DNA]</scope>
</reference>
<reference key="4">
    <citation type="journal article" date="2007" name="BMC Genomics">
        <title>The full-ORF clone resource of the German cDNA consortium.</title>
        <authorList>
            <person name="Bechtel S."/>
            <person name="Rosenfelder H."/>
            <person name="Duda A."/>
            <person name="Schmidt C.P."/>
            <person name="Ernst U."/>
            <person name="Wellenreuther R."/>
            <person name="Mehrle A."/>
            <person name="Schuster C."/>
            <person name="Bahr A."/>
            <person name="Bloecker H."/>
            <person name="Heubner D."/>
            <person name="Hoerlein A."/>
            <person name="Michel G."/>
            <person name="Wedler H."/>
            <person name="Koehrer K."/>
            <person name="Ottenwaelder B."/>
            <person name="Poustka A."/>
            <person name="Wiemann S."/>
            <person name="Schupp I."/>
        </authorList>
    </citation>
    <scope>NUCLEOTIDE SEQUENCE [LARGE SCALE MRNA] OF 1-277 AND 1043-1243</scope>
    <source>
        <tissue>Fetal kidney</tissue>
        <tissue>Uterine endothelium</tissue>
    </source>
</reference>
<reference key="5">
    <citation type="journal article" date="2010" name="EMBO J.">
        <title>RNAi-based screening identifies the Mms22L-Nfkbil2 complex as a novel regulator of DNA replication in human cells.</title>
        <authorList>
            <person name="Piwko W."/>
            <person name="Olma M.H."/>
            <person name="Held M."/>
            <person name="Bianco J.N."/>
            <person name="Pedrioli P.G."/>
            <person name="Hofmann K."/>
            <person name="Pasero P."/>
            <person name="Gerlich D.W."/>
            <person name="Peter M."/>
        </authorList>
    </citation>
    <scope>FUNCTION</scope>
    <scope>SUBCELLULAR LOCATION</scope>
    <scope>IDENTIFICATION IN THE MMS22L-TONSL COMPLEX</scope>
</reference>
<reference key="6">
    <citation type="journal article" date="2010" name="Mol. Cell">
        <title>The MMS22L-TONSL complex mediates recovery from replication stress and homologous recombination.</title>
        <authorList>
            <person name="O'Donnell L."/>
            <person name="Panier S."/>
            <person name="Wildenhain J."/>
            <person name="Tkach J.M."/>
            <person name="Al-Hakim A."/>
            <person name="Landry M.C."/>
            <person name="Escribano-Diaz C."/>
            <person name="Szilard R.K."/>
            <person name="Young J.T."/>
            <person name="Munro M."/>
            <person name="Canny M.D."/>
            <person name="Kolas N.K."/>
            <person name="Zhang W."/>
            <person name="Harding S.M."/>
            <person name="Ylanko J."/>
            <person name="Mendez M."/>
            <person name="Mullin M."/>
            <person name="Sun T."/>
            <person name="Habermann B."/>
            <person name="Datti A."/>
            <person name="Bristow R.G."/>
            <person name="Gingras A.C."/>
            <person name="Tyers M.D."/>
            <person name="Brown G.W."/>
            <person name="Durocher D."/>
        </authorList>
    </citation>
    <scope>FUNCTION</scope>
    <scope>SUBCELLULAR LOCATION</scope>
    <scope>IDENTIFICATION IN THE MMS22L-TONSL COMPLEX</scope>
</reference>
<reference key="7">
    <citation type="journal article" date="2010" name="Mol. Cell">
        <title>Identification of the MMS22L-TONSL complex that promotes homologous recombination.</title>
        <authorList>
            <person name="Duro E."/>
            <person name="Lundin C."/>
            <person name="Ask K."/>
            <person name="Sanchez-Pulido L."/>
            <person name="MacArtney T.J."/>
            <person name="Toth R."/>
            <person name="Ponting C.P."/>
            <person name="Groth A."/>
            <person name="Helleday T."/>
            <person name="Rouse J."/>
        </authorList>
    </citation>
    <scope>FUNCTION</scope>
    <scope>SUBCELLULAR LOCATION</scope>
    <scope>IDENTIFICATION IN THE MMS22L-TONSL COMPLEX</scope>
</reference>
<reference key="8">
    <citation type="journal article" date="2010" name="Mol. Cell">
        <title>A genome-wide camptothecin sensitivity screen identifies a mammalian MMS22L-NFKBIL2 complex required for genomic stability.</title>
        <authorList>
            <person name="O'Connell B.C."/>
            <person name="Adamson B."/>
            <person name="Lydeard J.R."/>
            <person name="Sowa M.E."/>
            <person name="Ciccia A."/>
            <person name="Bredemeyer A.L."/>
            <person name="Schlabach M."/>
            <person name="Gygi S.P."/>
            <person name="Elledge S.J."/>
            <person name="Harper J.W."/>
        </authorList>
    </citation>
    <scope>FUNCTION</scope>
    <scope>IDENTIFICATION IN THE MMS22L-TONSL COMPLEX</scope>
</reference>
<reference key="9">
    <citation type="journal article" date="2011" name="BMC Syst. Biol.">
        <title>Initial characterization of the human central proteome.</title>
        <authorList>
            <person name="Burkard T.R."/>
            <person name="Planyavsky M."/>
            <person name="Kaupe I."/>
            <person name="Breitwieser F.P."/>
            <person name="Buerckstuemmer T."/>
            <person name="Bennett K.L."/>
            <person name="Superti-Furga G."/>
            <person name="Colinge J."/>
        </authorList>
    </citation>
    <scope>IDENTIFICATION BY MASS SPECTROMETRY [LARGE SCALE ANALYSIS]</scope>
</reference>
<reference key="10">
    <citation type="journal article" date="2015" name="Mol. Cell">
        <title>Analysis of the histone H3.1 interactome: a suitable chaperone for the right event.</title>
        <authorList>
            <person name="Campos E.I."/>
            <person name="Smits A.H."/>
            <person name="Kang Y.H."/>
            <person name="Landry S."/>
            <person name="Escobar T.M."/>
            <person name="Nayak S."/>
            <person name="Ueberheide B.M."/>
            <person name="Durocher D."/>
            <person name="Vermeulen M."/>
            <person name="Hurwitz J."/>
            <person name="Reinberg D."/>
        </authorList>
    </citation>
    <scope>FUNCTION</scope>
</reference>
<reference key="11">
    <citation type="journal article" date="2016" name="EMBO J.">
        <title>The MMS22L-TONSL heterodimer directly promotes RAD51-dependent recombination upon replication stress.</title>
        <authorList>
            <person name="Piwko W."/>
            <person name="Mlejnkova L.J."/>
            <person name="Mutreja K."/>
            <person name="Ranjha L."/>
            <person name="Stafa D."/>
            <person name="Smirnov A."/>
            <person name="Brodersen M.M."/>
            <person name="Zellweger R."/>
            <person name="Sturzenegger A."/>
            <person name="Janscak P."/>
            <person name="Lopes M."/>
            <person name="Peter M."/>
            <person name="Cejka P."/>
        </authorList>
    </citation>
    <scope>FUNCTION</scope>
    <scope>SUBCELLULAR LOCATION</scope>
    <scope>IDENTIFICATION IN THE MMS22L-TONSL</scope>
    <scope>INTERACTION WITH RAD51</scope>
    <scope>MUTAGENESIS OF 29-PHE--ALA-32; 595-PHE--ALA-598; 1034-PHE--ALA-1037 AND PHE-1034</scope>
</reference>
<reference key="12">
    <citation type="journal article" date="2016" name="Nature">
        <title>H4K20me0 marks post-replicative chromatin and recruits the TONSL-MMS22L DNA repair complex.</title>
        <authorList>
            <person name="Saredi G."/>
            <person name="Huang H."/>
            <person name="Hammond C.M."/>
            <person name="Alabert C."/>
            <person name="Bekker-Jensen S."/>
            <person name="Forne I."/>
            <person name="Reveron-Gomez N."/>
            <person name="Foster B.M."/>
            <person name="Mlejnkova L."/>
            <person name="Bartke T."/>
            <person name="Cejka P."/>
            <person name="Mailand N."/>
            <person name="Imhof A."/>
            <person name="Patel D.J."/>
            <person name="Groth A."/>
        </authorList>
    </citation>
    <scope>FUNCTION</scope>
    <scope>IDENTIFICATION IN THE MMS22L-TONSL</scope>
</reference>
<reference key="13">
    <citation type="journal article" date="2018" name="Mol. Cell">
        <title>The histone chaperones ASF1 and CAF-1 promote MMS22L-TONSL-mediated Rad51 loading onto ssDNA during homologous recombination in human cells.</title>
        <authorList>
            <person name="Huang T.H."/>
            <person name="Fowler F."/>
            <person name="Chen C.C."/>
            <person name="Shen Z.J."/>
            <person name="Sleckman B."/>
            <person name="Tyler J.K."/>
        </authorList>
    </citation>
    <scope>FUNCTION</scope>
</reference>
<sequence length="1243" mass="142321">MENCSAASTFLTDSLELELGTEWCKPPYFSCAVDNRGGGKHFSGESYLCSGALKRLILNLDPLPTNFEEDTLEIFGIQWVTETALVNSSRELFHLFRQQLYNLETLLQSSCDFGKVSTLHCKADNIRQQCVLFLHYVKVFIFRYLKVQNAESHVPVHPYEALEAQLPSVLIDELHGLLLYIGHLSELPSVNIGAFVNQNQIKLFPPSWHLLHLHLDIHWLVLEILYMLGEKLKQVVYGHQFMNLASDNLTNISLFEEHCETLLCDLISLSLNRYDKVRSSESLMSDQCPCLCIKELWVLLIHLLDHRSKWFVSESFWNWLNKLLKTLLEKSSDRRRSSMPVIQSRDPLGFSWWIITHVASFYKFDRHGVPDEMRKVESNWNFVEELLKKSISVQGVILEEQLRMYLHCCLTLCDFWEPNIAIVTILWEYYSKNLNSSFSISWLPFKGLANTMKSPLSMLEMVKTCCCDKQDQELYKSSSSYTIFLCILAKVVKKAMKSNGPHPWKQVKGRIYSKFHQKRMEELTEVGLQNFFSLFLLLAAVAEVEDVASHVLDLLNFLKPAFVTSQRALIWKGHMAFLLMYAQKNLDIGVLAEKFSCAFREKAKEFLVSKNEEMVQRQTIWTLLSIYIDGVQEVFETSYCLYPSHEKLLNDGFSMLLRACRESELRTVLSFLQAVLARIRSMHQQLCQELQRDNVDLFVQSSLSAKERHLAAVASALWRHFFSFLKSQRMSQVVPFSQLADAAADFTLLAMDMPSTAPSDFQPQPVISIIQLFGWDDIICPQVVARYLSHVLQNSTLCEALSHSGYVSFQALTVRSWIRCVLQMYIKNLSGPDDLLIDKNLEEAVEKEYMKQLVKLTRLLFNLSEVKSIFSKAQVEYLSISEDPKKALVRFFEAVGVTYGNVQTLSDKSAMVTKSLEYLGEVLKYIKPYLGKKVFSAGLQLTYGMMGILVKSWAQIFATSKAQKLLFRIIDCLLLPHAVLQQEKELPAPMLSAIQKSLPLYLQGMCIVCCQSQNPNAYLNQLLGNVIEQYIGRFLPASPYVSDLGQHPVLLALRNTATIPPISSLKKCIVQVIRKSYLEYKGSSPPPRLASILAFILQLFKETNTDIYEVELLLPGILKCLVLVSEPQVKRLATENLQYMVKACQVGSEEEPSSQLTSVFRQFIQDYGMRYYYQVYSILETVATLDQQVVIHLISTLTQSLKDSEQKWGLGRNIAQREAYSKLLSHLGQMGQDEMQRLENDNT</sequence>
<evidence type="ECO:0000269" key="1">
    <source>
    </source>
</evidence>
<evidence type="ECO:0000269" key="2">
    <source>
    </source>
</evidence>
<evidence type="ECO:0000269" key="3">
    <source>
    </source>
</evidence>
<evidence type="ECO:0000269" key="4">
    <source>
    </source>
</evidence>
<evidence type="ECO:0000269" key="5">
    <source>
    </source>
</evidence>
<evidence type="ECO:0000269" key="6">
    <source>
    </source>
</evidence>
<evidence type="ECO:0000269" key="7">
    <source>
    </source>
</evidence>
<evidence type="ECO:0000269" key="8">
    <source>
    </source>
</evidence>
<evidence type="ECO:0000269" key="9">
    <source>
    </source>
</evidence>
<evidence type="ECO:0000303" key="10">
    <source>
    </source>
</evidence>
<evidence type="ECO:0000303" key="11">
    <source>
    </source>
</evidence>
<evidence type="ECO:0000305" key="12"/>
<evidence type="ECO:0000312" key="13">
    <source>
        <dbReference type="HGNC" id="HGNC:21475"/>
    </source>
</evidence>
<keyword id="KW-0156">Chromatin regulator</keyword>
<keyword id="KW-0158">Chromosome</keyword>
<keyword id="KW-0227">DNA damage</keyword>
<keyword id="KW-0234">DNA repair</keyword>
<keyword id="KW-0238">DNA-binding</keyword>
<keyword id="KW-0539">Nucleus</keyword>
<keyword id="KW-1267">Proteomics identification</keyword>
<keyword id="KW-1185">Reference proteome</keyword>
<proteinExistence type="evidence at protein level"/>